<protein>
    <recommendedName>
        <fullName evidence="1">Aspartate carbamoyltransferase regulatory chain</fullName>
    </recommendedName>
</protein>
<name>PYRI_ECODH</name>
<keyword id="KW-0479">Metal-binding</keyword>
<keyword id="KW-0665">Pyrimidine biosynthesis</keyword>
<keyword id="KW-0862">Zinc</keyword>
<organism>
    <name type="scientific">Escherichia coli (strain K12 / DH10B)</name>
    <dbReference type="NCBI Taxonomy" id="316385"/>
    <lineage>
        <taxon>Bacteria</taxon>
        <taxon>Pseudomonadati</taxon>
        <taxon>Pseudomonadota</taxon>
        <taxon>Gammaproteobacteria</taxon>
        <taxon>Enterobacterales</taxon>
        <taxon>Enterobacteriaceae</taxon>
        <taxon>Escherichia</taxon>
    </lineage>
</organism>
<reference key="1">
    <citation type="journal article" date="2008" name="J. Bacteriol.">
        <title>The complete genome sequence of Escherichia coli DH10B: insights into the biology of a laboratory workhorse.</title>
        <authorList>
            <person name="Durfee T."/>
            <person name="Nelson R."/>
            <person name="Baldwin S."/>
            <person name="Plunkett G. III"/>
            <person name="Burland V."/>
            <person name="Mau B."/>
            <person name="Petrosino J.F."/>
            <person name="Qin X."/>
            <person name="Muzny D.M."/>
            <person name="Ayele M."/>
            <person name="Gibbs R.A."/>
            <person name="Csorgo B."/>
            <person name="Posfai G."/>
            <person name="Weinstock G.M."/>
            <person name="Blattner F.R."/>
        </authorList>
    </citation>
    <scope>NUCLEOTIDE SEQUENCE [LARGE SCALE GENOMIC DNA]</scope>
    <source>
        <strain>K12 / DH10B</strain>
    </source>
</reference>
<accession>B1XEM5</accession>
<feature type="chain" id="PRO_1000088824" description="Aspartate carbamoyltransferase regulatory chain">
    <location>
        <begin position="1"/>
        <end position="153"/>
    </location>
</feature>
<feature type="binding site" evidence="1">
    <location>
        <position position="109"/>
    </location>
    <ligand>
        <name>Zn(2+)</name>
        <dbReference type="ChEBI" id="CHEBI:29105"/>
    </ligand>
</feature>
<feature type="binding site" evidence="1">
    <location>
        <position position="114"/>
    </location>
    <ligand>
        <name>Zn(2+)</name>
        <dbReference type="ChEBI" id="CHEBI:29105"/>
    </ligand>
</feature>
<feature type="binding site" evidence="1">
    <location>
        <position position="138"/>
    </location>
    <ligand>
        <name>Zn(2+)</name>
        <dbReference type="ChEBI" id="CHEBI:29105"/>
    </ligand>
</feature>
<feature type="binding site" evidence="1">
    <location>
        <position position="141"/>
    </location>
    <ligand>
        <name>Zn(2+)</name>
        <dbReference type="ChEBI" id="CHEBI:29105"/>
    </ligand>
</feature>
<evidence type="ECO:0000255" key="1">
    <source>
        <dbReference type="HAMAP-Rule" id="MF_00002"/>
    </source>
</evidence>
<proteinExistence type="inferred from homology"/>
<sequence length="153" mass="17121">MTHDNKLQVEAIKRGTVIDHIPAQIGFKLLSLFKLTETDQRITIGLNLPSGEMGRKDLIKIENTFLSEDQVDQLALYAPQATVNRIDNYEVVGKSRPSLPERIDNVLVCPNSNCISHAEPVSSSFAVRKRANDIALKCKYCEKEFSHNVVLAN</sequence>
<comment type="function">
    <text evidence="1">Involved in allosteric regulation of aspartate carbamoyltransferase.</text>
</comment>
<comment type="cofactor">
    <cofactor evidence="1">
        <name>Zn(2+)</name>
        <dbReference type="ChEBI" id="CHEBI:29105"/>
    </cofactor>
    <text evidence="1">Binds 1 zinc ion per subunit.</text>
</comment>
<comment type="subunit">
    <text evidence="1">Contains catalytic and regulatory chains.</text>
</comment>
<comment type="similarity">
    <text evidence="1">Belongs to the PyrI family.</text>
</comment>
<gene>
    <name evidence="1" type="primary">pyrI</name>
    <name type="ordered locus">ECDH10B_4439</name>
</gene>
<dbReference type="EMBL" id="CP000948">
    <property type="protein sequence ID" value="ACB05227.1"/>
    <property type="molecule type" value="Genomic_DNA"/>
</dbReference>
<dbReference type="RefSeq" id="WP_000148581.1">
    <property type="nucleotide sequence ID" value="NC_010473.1"/>
</dbReference>
<dbReference type="SMR" id="B1XEM5"/>
<dbReference type="GeneID" id="93777580"/>
<dbReference type="KEGG" id="ecd:ECDH10B_4439"/>
<dbReference type="HOGENOM" id="CLU_128576_0_0_6"/>
<dbReference type="GO" id="GO:0009347">
    <property type="term" value="C:aspartate carbamoyltransferase complex"/>
    <property type="evidence" value="ECO:0007669"/>
    <property type="project" value="InterPro"/>
</dbReference>
<dbReference type="GO" id="GO:0046872">
    <property type="term" value="F:metal ion binding"/>
    <property type="evidence" value="ECO:0007669"/>
    <property type="project" value="UniProtKB-KW"/>
</dbReference>
<dbReference type="GO" id="GO:0006207">
    <property type="term" value="P:'de novo' pyrimidine nucleobase biosynthetic process"/>
    <property type="evidence" value="ECO:0007669"/>
    <property type="project" value="InterPro"/>
</dbReference>
<dbReference type="GO" id="GO:0006221">
    <property type="term" value="P:pyrimidine nucleotide biosynthetic process"/>
    <property type="evidence" value="ECO:0007669"/>
    <property type="project" value="UniProtKB-UniRule"/>
</dbReference>
<dbReference type="FunFam" id="2.30.30.20:FF:000001">
    <property type="entry name" value="Aspartate carbamoyltransferase regulatory chain"/>
    <property type="match status" value="1"/>
</dbReference>
<dbReference type="FunFam" id="3.30.70.140:FF:000001">
    <property type="entry name" value="Aspartate carbamoyltransferase regulatory chain"/>
    <property type="match status" value="1"/>
</dbReference>
<dbReference type="Gene3D" id="2.30.30.20">
    <property type="entry name" value="Aspartate carbamoyltransferase regulatory subunit, C-terminal domain"/>
    <property type="match status" value="1"/>
</dbReference>
<dbReference type="Gene3D" id="3.30.70.140">
    <property type="entry name" value="Aspartate carbamoyltransferase regulatory subunit, N-terminal domain"/>
    <property type="match status" value="1"/>
</dbReference>
<dbReference type="HAMAP" id="MF_00002">
    <property type="entry name" value="Asp_carb_tr_reg"/>
    <property type="match status" value="1"/>
</dbReference>
<dbReference type="InterPro" id="IPR020545">
    <property type="entry name" value="Asp_carbamoyltransf_reg_N"/>
</dbReference>
<dbReference type="InterPro" id="IPR002801">
    <property type="entry name" value="Asp_carbamoylTrfase_reg"/>
</dbReference>
<dbReference type="InterPro" id="IPR020542">
    <property type="entry name" value="Asp_carbamoyltrfase_reg_C"/>
</dbReference>
<dbReference type="InterPro" id="IPR036792">
    <property type="entry name" value="Asp_carbatrfase_reg_C_sf"/>
</dbReference>
<dbReference type="InterPro" id="IPR036793">
    <property type="entry name" value="Asp_carbatrfase_reg_N_sf"/>
</dbReference>
<dbReference type="NCBIfam" id="TIGR00240">
    <property type="entry name" value="ATCase_reg"/>
    <property type="match status" value="1"/>
</dbReference>
<dbReference type="PANTHER" id="PTHR35805">
    <property type="entry name" value="ASPARTATE CARBAMOYLTRANSFERASE REGULATORY CHAIN"/>
    <property type="match status" value="1"/>
</dbReference>
<dbReference type="PANTHER" id="PTHR35805:SF1">
    <property type="entry name" value="ASPARTATE CARBAMOYLTRANSFERASE REGULATORY CHAIN"/>
    <property type="match status" value="1"/>
</dbReference>
<dbReference type="Pfam" id="PF01948">
    <property type="entry name" value="PyrI"/>
    <property type="match status" value="1"/>
</dbReference>
<dbReference type="Pfam" id="PF02748">
    <property type="entry name" value="PyrI_C"/>
    <property type="match status" value="1"/>
</dbReference>
<dbReference type="SUPFAM" id="SSF57825">
    <property type="entry name" value="Aspartate carbamoyltransferase, Regulatory-chain, C-terminal domain"/>
    <property type="match status" value="1"/>
</dbReference>
<dbReference type="SUPFAM" id="SSF54893">
    <property type="entry name" value="Aspartate carbamoyltransferase, Regulatory-chain, N-terminal domain"/>
    <property type="match status" value="1"/>
</dbReference>